<gene>
    <name type="primary">lysX</name>
    <name type="ordered locus">TBMG_02353</name>
</gene>
<proteinExistence type="inferred from homology"/>
<keyword id="KW-0030">Aminoacyl-tRNA synthetase</keyword>
<keyword id="KW-0046">Antibiotic resistance</keyword>
<keyword id="KW-0067">ATP-binding</keyword>
<keyword id="KW-1003">Cell membrane</keyword>
<keyword id="KW-0238">DNA-binding</keyword>
<keyword id="KW-0436">Ligase</keyword>
<keyword id="KW-0443">Lipid metabolism</keyword>
<keyword id="KW-0460">Magnesium</keyword>
<keyword id="KW-0472">Membrane</keyword>
<keyword id="KW-0479">Metal-binding</keyword>
<keyword id="KW-0511">Multifunctional enzyme</keyword>
<keyword id="KW-0547">Nucleotide-binding</keyword>
<keyword id="KW-0808">Transferase</keyword>
<keyword id="KW-0812">Transmembrane</keyword>
<keyword id="KW-1133">Transmembrane helix</keyword>
<keyword id="KW-0843">Virulence</keyword>
<name>LYSX_MYCTK</name>
<reference key="1">
    <citation type="submission" date="2009-07" db="EMBL/GenBank/DDBJ databases">
        <title>The genome sequence of Mycobacterium tuberculosis strain KZN 1435.</title>
        <authorList>
            <person name="Murray M."/>
            <person name="Pillay M."/>
            <person name="Borowsky M.L."/>
            <person name="Young S.K."/>
            <person name="Zeng Q."/>
            <person name="Koehrsen M."/>
            <person name="Alvarado L."/>
            <person name="Berlin A.M."/>
            <person name="Borenstein D."/>
            <person name="Chen Z."/>
            <person name="Engels R."/>
            <person name="Freedman E."/>
            <person name="Gellesch M."/>
            <person name="Goldberg J."/>
            <person name="Griggs A."/>
            <person name="Gujja S."/>
            <person name="Heiman D.I."/>
            <person name="Hepburn T.A."/>
            <person name="Howarth C."/>
            <person name="Jen D."/>
            <person name="Larson L."/>
            <person name="Lewis B."/>
            <person name="Mehta T."/>
            <person name="Park D."/>
            <person name="Pearson M."/>
            <person name="Roberts A."/>
            <person name="Saif S."/>
            <person name="Shea T.D."/>
            <person name="Shenoy N."/>
            <person name="Sisk P."/>
            <person name="Stolte C."/>
            <person name="Sykes S.N."/>
            <person name="Walk T."/>
            <person name="White J."/>
            <person name="Yandava C."/>
            <person name="Haas B."/>
            <person name="Nusbaum C."/>
            <person name="Galagan J."/>
            <person name="Birren B."/>
        </authorList>
    </citation>
    <scope>NUCLEOTIDE SEQUENCE [LARGE SCALE GENOMIC DNA]</scope>
    <source>
        <strain>KZN 1435 / MDR</strain>
    </source>
</reference>
<feature type="chain" id="PRO_0000394330" description="Lysylphosphatidylglycerol biosynthesis bifunctional protein LysX">
    <location>
        <begin position="1"/>
        <end position="1174"/>
    </location>
</feature>
<feature type="transmembrane region" description="Helical" evidence="2">
    <location>
        <begin position="82"/>
        <end position="102"/>
    </location>
</feature>
<feature type="transmembrane region" description="Helical" evidence="2">
    <location>
        <begin position="124"/>
        <end position="144"/>
    </location>
</feature>
<feature type="transmembrane region" description="Helical" evidence="2">
    <location>
        <begin position="148"/>
        <end position="168"/>
    </location>
</feature>
<feature type="transmembrane region" description="Helical" evidence="2">
    <location>
        <begin position="179"/>
        <end position="199"/>
    </location>
</feature>
<feature type="transmembrane region" description="Helical" evidence="2">
    <location>
        <begin position="216"/>
        <end position="236"/>
    </location>
</feature>
<feature type="transmembrane region" description="Helical" evidence="2">
    <location>
        <begin position="274"/>
        <end position="294"/>
    </location>
</feature>
<feature type="transmembrane region" description="Helical" evidence="2">
    <location>
        <begin position="614"/>
        <end position="634"/>
    </location>
</feature>
<feature type="DNA-binding region" description="OB">
    <location>
        <begin position="728"/>
        <end position="806"/>
    </location>
</feature>
<feature type="region of interest" description="Phosphatidylglycerol lysyltransferase">
    <location>
        <begin position="1"/>
        <end position="665"/>
    </location>
</feature>
<feature type="region of interest" description="Disordered" evidence="3">
    <location>
        <begin position="9"/>
        <end position="36"/>
    </location>
</feature>
<feature type="region of interest" description="Lysine--tRNA ligase">
    <location>
        <begin position="666"/>
        <end position="1174"/>
    </location>
</feature>
<feature type="compositionally biased region" description="Polar residues" evidence="3">
    <location>
        <begin position="19"/>
        <end position="33"/>
    </location>
</feature>
<feature type="binding site" evidence="1">
    <location>
        <position position="1086"/>
    </location>
    <ligand>
        <name>Mg(2+)</name>
        <dbReference type="ChEBI" id="CHEBI:18420"/>
        <label>1</label>
    </ligand>
</feature>
<feature type="binding site" evidence="1">
    <location>
        <position position="1093"/>
    </location>
    <ligand>
        <name>Mg(2+)</name>
        <dbReference type="ChEBI" id="CHEBI:18420"/>
        <label>1</label>
    </ligand>
</feature>
<feature type="binding site" evidence="1">
    <location>
        <position position="1093"/>
    </location>
    <ligand>
        <name>Mg(2+)</name>
        <dbReference type="ChEBI" id="CHEBI:18420"/>
        <label>2</label>
    </ligand>
</feature>
<evidence type="ECO:0000250" key="1"/>
<evidence type="ECO:0000255" key="2"/>
<evidence type="ECO:0000256" key="3">
    <source>
        <dbReference type="SAM" id="MobiDB-lite"/>
    </source>
</evidence>
<evidence type="ECO:0000305" key="4"/>
<accession>C6DS31</accession>
<protein>
    <recommendedName>
        <fullName>Lysylphosphatidylglycerol biosynthesis bifunctional protein LysX</fullName>
    </recommendedName>
    <domain>
        <recommendedName>
            <fullName>Lysine--tRNA ligase</fullName>
            <ecNumber>6.1.1.6</ecNumber>
        </recommendedName>
        <alternativeName>
            <fullName>Lysyl-tRNA synthetase</fullName>
            <shortName>LysRS</shortName>
        </alternativeName>
    </domain>
    <domain>
        <recommendedName>
            <fullName>Phosphatidylglycerol lysyltransferase</fullName>
            <ecNumber>2.3.2.3</ecNumber>
        </recommendedName>
        <alternativeName>
            <fullName>Lysylphosphatidylglycerol synthetase</fullName>
            <shortName>LPG synthetase</shortName>
        </alternativeName>
    </domain>
</protein>
<organism>
    <name type="scientific">Mycobacterium tuberculosis (strain KZN 1435 / MDR)</name>
    <dbReference type="NCBI Taxonomy" id="478434"/>
    <lineage>
        <taxon>Bacteria</taxon>
        <taxon>Bacillati</taxon>
        <taxon>Actinomycetota</taxon>
        <taxon>Actinomycetes</taxon>
        <taxon>Mycobacteriales</taxon>
        <taxon>Mycobacteriaceae</taxon>
        <taxon>Mycobacterium</taxon>
        <taxon>Mycobacterium tuberculosis complex</taxon>
    </lineage>
</organism>
<dbReference type="EC" id="6.1.1.6"/>
<dbReference type="EC" id="2.3.2.3"/>
<dbReference type="EMBL" id="CP001658">
    <property type="protein sequence ID" value="ACT25426.1"/>
    <property type="molecule type" value="Genomic_DNA"/>
</dbReference>
<dbReference type="SMR" id="C6DS31"/>
<dbReference type="KEGG" id="mtb:TBMG_02353"/>
<dbReference type="HOGENOM" id="CLU_008255_2_0_11"/>
<dbReference type="GO" id="GO:0005829">
    <property type="term" value="C:cytosol"/>
    <property type="evidence" value="ECO:0007669"/>
    <property type="project" value="TreeGrafter"/>
</dbReference>
<dbReference type="GO" id="GO:0005886">
    <property type="term" value="C:plasma membrane"/>
    <property type="evidence" value="ECO:0007669"/>
    <property type="project" value="UniProtKB-SubCell"/>
</dbReference>
<dbReference type="GO" id="GO:0005524">
    <property type="term" value="F:ATP binding"/>
    <property type="evidence" value="ECO:0007669"/>
    <property type="project" value="UniProtKB-UniRule"/>
</dbReference>
<dbReference type="GO" id="GO:0003677">
    <property type="term" value="F:DNA binding"/>
    <property type="evidence" value="ECO:0007669"/>
    <property type="project" value="UniProtKB-KW"/>
</dbReference>
<dbReference type="GO" id="GO:0004824">
    <property type="term" value="F:lysine-tRNA ligase activity"/>
    <property type="evidence" value="ECO:0007669"/>
    <property type="project" value="UniProtKB-UniRule"/>
</dbReference>
<dbReference type="GO" id="GO:0000287">
    <property type="term" value="F:magnesium ion binding"/>
    <property type="evidence" value="ECO:0007669"/>
    <property type="project" value="UniProtKB-UniRule"/>
</dbReference>
<dbReference type="GO" id="GO:0050071">
    <property type="term" value="F:phosphatidylglycerol lysyltransferase activity"/>
    <property type="evidence" value="ECO:0007669"/>
    <property type="project" value="UniProtKB-EC"/>
</dbReference>
<dbReference type="GO" id="GO:0000049">
    <property type="term" value="F:tRNA binding"/>
    <property type="evidence" value="ECO:0007669"/>
    <property type="project" value="TreeGrafter"/>
</dbReference>
<dbReference type="GO" id="GO:0006629">
    <property type="term" value="P:lipid metabolic process"/>
    <property type="evidence" value="ECO:0007669"/>
    <property type="project" value="UniProtKB-KW"/>
</dbReference>
<dbReference type="GO" id="GO:0006430">
    <property type="term" value="P:lysyl-tRNA aminoacylation"/>
    <property type="evidence" value="ECO:0007669"/>
    <property type="project" value="UniProtKB-UniRule"/>
</dbReference>
<dbReference type="GO" id="GO:0046677">
    <property type="term" value="P:response to antibiotic"/>
    <property type="evidence" value="ECO:0007669"/>
    <property type="project" value="UniProtKB-KW"/>
</dbReference>
<dbReference type="CDD" id="cd04322">
    <property type="entry name" value="LysRS_N"/>
    <property type="match status" value="1"/>
</dbReference>
<dbReference type="FunFam" id="2.40.50.140:FF:000404">
    <property type="entry name" value="Lysylphosphatidylglycerol biosynthesis bifunctional protein LysX"/>
    <property type="match status" value="1"/>
</dbReference>
<dbReference type="Gene3D" id="3.30.930.10">
    <property type="entry name" value="Bira Bifunctional Protein, Domain 2"/>
    <property type="match status" value="1"/>
</dbReference>
<dbReference type="Gene3D" id="2.40.50.140">
    <property type="entry name" value="Nucleic acid-binding proteins"/>
    <property type="match status" value="1"/>
</dbReference>
<dbReference type="HAMAP" id="MF_00252">
    <property type="entry name" value="Lys_tRNA_synth_class2"/>
    <property type="match status" value="1"/>
</dbReference>
<dbReference type="InterPro" id="IPR004364">
    <property type="entry name" value="Aa-tRNA-synt_II"/>
</dbReference>
<dbReference type="InterPro" id="IPR006195">
    <property type="entry name" value="aa-tRNA-synth_II"/>
</dbReference>
<dbReference type="InterPro" id="IPR045864">
    <property type="entry name" value="aa-tRNA-synth_II/BPL/LPL"/>
</dbReference>
<dbReference type="InterPro" id="IPR024320">
    <property type="entry name" value="LPG_synthase_C"/>
</dbReference>
<dbReference type="InterPro" id="IPR002313">
    <property type="entry name" value="Lys-tRNA-ligase_II"/>
</dbReference>
<dbReference type="InterPro" id="IPR044136">
    <property type="entry name" value="Lys-tRNA-ligase_II_N"/>
</dbReference>
<dbReference type="InterPro" id="IPR018149">
    <property type="entry name" value="Lys-tRNA-synth_II_C"/>
</dbReference>
<dbReference type="InterPro" id="IPR012340">
    <property type="entry name" value="NA-bd_OB-fold"/>
</dbReference>
<dbReference type="InterPro" id="IPR004365">
    <property type="entry name" value="NA-bd_OB_tRNA"/>
</dbReference>
<dbReference type="InterPro" id="IPR031553">
    <property type="entry name" value="tRNA-synt_2_TM"/>
</dbReference>
<dbReference type="NCBIfam" id="TIGR00499">
    <property type="entry name" value="lysS_bact"/>
    <property type="match status" value="1"/>
</dbReference>
<dbReference type="NCBIfam" id="NF001756">
    <property type="entry name" value="PRK00484.1"/>
    <property type="match status" value="1"/>
</dbReference>
<dbReference type="NCBIfam" id="NF002821">
    <property type="entry name" value="PRK02983.1"/>
    <property type="match status" value="1"/>
</dbReference>
<dbReference type="PANTHER" id="PTHR42918:SF15">
    <property type="entry name" value="LYSINE--TRNA LIGASE, CHLOROPLASTIC_MITOCHONDRIAL"/>
    <property type="match status" value="1"/>
</dbReference>
<dbReference type="PANTHER" id="PTHR42918">
    <property type="entry name" value="LYSYL-TRNA SYNTHETASE"/>
    <property type="match status" value="1"/>
</dbReference>
<dbReference type="Pfam" id="PF09924">
    <property type="entry name" value="LPG_synthase_C"/>
    <property type="match status" value="1"/>
</dbReference>
<dbReference type="Pfam" id="PF00152">
    <property type="entry name" value="tRNA-synt_2"/>
    <property type="match status" value="1"/>
</dbReference>
<dbReference type="Pfam" id="PF16995">
    <property type="entry name" value="tRNA-synt_2_TM"/>
    <property type="match status" value="1"/>
</dbReference>
<dbReference type="Pfam" id="PF01336">
    <property type="entry name" value="tRNA_anti-codon"/>
    <property type="match status" value="1"/>
</dbReference>
<dbReference type="PRINTS" id="PR00982">
    <property type="entry name" value="TRNASYNTHLYS"/>
</dbReference>
<dbReference type="SUPFAM" id="SSF55681">
    <property type="entry name" value="Class II aaRS and biotin synthetases"/>
    <property type="match status" value="1"/>
</dbReference>
<dbReference type="SUPFAM" id="SSF50249">
    <property type="entry name" value="Nucleic acid-binding proteins"/>
    <property type="match status" value="1"/>
</dbReference>
<dbReference type="PROSITE" id="PS50862">
    <property type="entry name" value="AA_TRNA_LIGASE_II"/>
    <property type="match status" value="1"/>
</dbReference>
<comment type="function">
    <text evidence="1">Catalyzes the production of L-lysyl-tRNA(Lys)transfer and the transfer of a lysyl group from L-lysyl-tRNA(Lys) to membrane-bound phosphatidylglycerol (PG), which produces lysylphosphatidylglycerol (LPG), one of the components of the bacterial membrane with a positive net charge. LPG synthesis contributes to the resistance to cationic antimicrobial peptides (CAMPs) and likely protects M.tuberculosis against the CAMPs produced by competiting microorganisms (bacteriocins). In fact, the modification of anionic phosphatidylglycerol with positively charged L-lysine results in repulsion of the peptides (By similarity).</text>
</comment>
<comment type="catalytic activity">
    <reaction>
        <text>tRNA(Lys) + L-lysine + ATP = L-lysyl-tRNA(Lys) + AMP + diphosphate</text>
        <dbReference type="Rhea" id="RHEA:20792"/>
        <dbReference type="Rhea" id="RHEA-COMP:9696"/>
        <dbReference type="Rhea" id="RHEA-COMP:9697"/>
        <dbReference type="ChEBI" id="CHEBI:30616"/>
        <dbReference type="ChEBI" id="CHEBI:32551"/>
        <dbReference type="ChEBI" id="CHEBI:33019"/>
        <dbReference type="ChEBI" id="CHEBI:78442"/>
        <dbReference type="ChEBI" id="CHEBI:78529"/>
        <dbReference type="ChEBI" id="CHEBI:456215"/>
        <dbReference type="EC" id="6.1.1.6"/>
    </reaction>
</comment>
<comment type="catalytic activity">
    <reaction>
        <text>L-lysyl-tRNA(Lys) + a 1,2-diacyl-sn-glycero-3-phospho-(1'-sn-glycerol) = a 1,2-diacyl-sn-glycero-3-phospho-1'-(3'-O-L-lysyl)-sn-glycerol + tRNA(Lys)</text>
        <dbReference type="Rhea" id="RHEA:10668"/>
        <dbReference type="Rhea" id="RHEA-COMP:9696"/>
        <dbReference type="Rhea" id="RHEA-COMP:9697"/>
        <dbReference type="ChEBI" id="CHEBI:64716"/>
        <dbReference type="ChEBI" id="CHEBI:75792"/>
        <dbReference type="ChEBI" id="CHEBI:78442"/>
        <dbReference type="ChEBI" id="CHEBI:78529"/>
        <dbReference type="EC" id="2.3.2.3"/>
    </reaction>
</comment>
<comment type="cofactor">
    <cofactor evidence="1">
        <name>Mg(2+)</name>
        <dbReference type="ChEBI" id="CHEBI:18420"/>
    </cofactor>
    <text evidence="1">Binds 3 Mg(2+) ions per subunit.</text>
</comment>
<comment type="subcellular location">
    <subcellularLocation>
        <location evidence="4">Cell membrane</location>
        <topology evidence="4">Multi-pass membrane protein</topology>
    </subcellularLocation>
</comment>
<comment type="similarity">
    <text evidence="4">In the N-terminal section; belongs to the LPG synthetase family.</text>
</comment>
<comment type="similarity">
    <text evidence="4">In the C-terminal section; belongs to the class-II aminoacyl-tRNA synthetase family.</text>
</comment>
<sequence>MGVGLHLTVPGLRRDGRGVQSNSHDTSSKTTADISRCPQHTDAGLQRAATPGISRLLGISSRSVTLTKPRSATRGNSRYHWVPAAAGWTVGVIATLSLLASVSPLIRWIIKVPREFINDYLFNFPDTNFAWSFVLALLAAALTARKRIAWLVLLANMVLAAVVNAAEIAAGGNTAAESFGENLGFAVHVVAIVVLVLGYREFWAKVRRGALFRAAAVWLAGAVVGIVASWGLVELFPGSLAPDERLGYAANRVVGFALADPDLFTGRPHVFLNAIFGLFGAFALIGAAIVLFLSQRADNALTGEDESAIRGLLDLYGKDDSLGYFATRRDKSVVFASSGRACITYRVEVGVCLASGDPVGDHRAWPQAVDAWLRLCQTYGWAPGVMGASSQGAQTYREAGLTALELGDEAILRPADFKLSGPEMRGVRQAVTRARRAGLTVRIRRHRDIAEDEMAQTITRADSWRDTETERGFSMALGRLGDPADSDCLLVEAIDPHNQVLAMLSLVPWGTTGVSLDLMRRSPQSPNGTIELMVSELALHAESLGITRISLNFAVFRAAFEQGAQLGAGPVARLWRGLLVFFSRWWQLETLYRSNMKYQPEWVPRYACYEDARVIPRVGVASVIAEGFLVLPFSRRNRVHTGHHPAVPERLAATGLLHHDGSAPDVSGLRQVGLTNGDGVERRLPEQVRVRFDKLEKLRSSGIDAFPVGRPPSHTVAQALAADHQASVSVSGRIMRIRNYGGVLFAQLRDWSGEMQVLLDNSRLDQGCAADFNAATDLGDLVEMTGHMGASKTGTPSLIVSGWRLIGKCLRPLPNKWKGLLDPEARVRTRYLDLAVNAESRALITARSSVLRAVRETLFAKGFVEVETPILQQLHGGATARPFVTHINTYSMDLFLRIAPELYLKRLCVGGVERVFELGRAFRNEGVDFSHNPEFTLLEAYQAHADYLEWIDGCRELIQNAAQAANGAPIAMRPRTDKGSDGTRHHLEPVDISGIWPVRTVHDAISEALGERIDADTGLTTLRKLCDAAGVPYRTQWDAGAVVLELYEHLVECRTEQPTFYIDFPTSVSPLTRPHRSKRGVAERWDLVAWGIELGTAYSELTDPVEQRRRLQEQSLLAAGGDPEAMELDEDFLQAMEYAMPPTGGLGMGIDRVVMLITGRSIRETLPFPLAKPH</sequence>